<name>ZNT6_DANRE</name>
<evidence type="ECO:0000250" key="1">
    <source>
        <dbReference type="UniProtKB" id="Q6NXT4"/>
    </source>
</evidence>
<evidence type="ECO:0000255" key="2"/>
<evidence type="ECO:0000256" key="3">
    <source>
        <dbReference type="SAM" id="MobiDB-lite"/>
    </source>
</evidence>
<evidence type="ECO:0000305" key="4"/>
<feature type="chain" id="PRO_0000312576" description="Zinc transporter 6">
    <location>
        <begin position="1"/>
        <end position="486"/>
    </location>
</feature>
<feature type="topological domain" description="Cytoplasmic" evidence="2">
    <location>
        <begin position="1"/>
        <end position="60"/>
    </location>
</feature>
<feature type="transmembrane region" description="Helical" evidence="2">
    <location>
        <begin position="61"/>
        <end position="81"/>
    </location>
</feature>
<feature type="topological domain" description="Extracellular" evidence="2">
    <location>
        <begin position="82"/>
        <end position="91"/>
    </location>
</feature>
<feature type="transmembrane region" description="Helical" evidence="2">
    <location>
        <begin position="92"/>
        <end position="112"/>
    </location>
</feature>
<feature type="topological domain" description="Cytoplasmic" evidence="2">
    <location>
        <begin position="113"/>
        <end position="125"/>
    </location>
</feature>
<feature type="transmembrane region" description="Helical" evidence="2">
    <location>
        <begin position="126"/>
        <end position="146"/>
    </location>
</feature>
<feature type="topological domain" description="Extracellular" evidence="2">
    <location>
        <begin position="147"/>
        <end position="161"/>
    </location>
</feature>
<feature type="transmembrane region" description="Helical" evidence="2">
    <location>
        <begin position="162"/>
        <end position="182"/>
    </location>
</feature>
<feature type="topological domain" description="Cytoplasmic" evidence="2">
    <location>
        <begin position="183"/>
        <end position="227"/>
    </location>
</feature>
<feature type="transmembrane region" description="Helical" evidence="2">
    <location>
        <begin position="228"/>
        <end position="248"/>
    </location>
</feature>
<feature type="topological domain" description="Extracellular" evidence="2">
    <location>
        <begin position="249"/>
        <end position="255"/>
    </location>
</feature>
<feature type="transmembrane region" description="Helical" evidence="2">
    <location>
        <begin position="256"/>
        <end position="276"/>
    </location>
</feature>
<feature type="topological domain" description="Cytoplasmic" evidence="2">
    <location>
        <begin position="277"/>
        <end position="486"/>
    </location>
</feature>
<feature type="region of interest" description="Disordered" evidence="3">
    <location>
        <begin position="394"/>
        <end position="425"/>
    </location>
</feature>
<feature type="compositionally biased region" description="Low complexity" evidence="3">
    <location>
        <begin position="394"/>
        <end position="411"/>
    </location>
</feature>
<reference key="1">
    <citation type="submission" date="2004-01" db="EMBL/GenBank/DDBJ databases">
        <authorList>
            <consortium name="NIH - Zebrafish Gene Collection (ZGC) project"/>
        </authorList>
    </citation>
    <scope>NUCLEOTIDE SEQUENCE [LARGE SCALE MRNA]</scope>
    <source>
        <tissue>Embryo</tissue>
    </source>
</reference>
<protein>
    <recommendedName>
        <fullName>Zinc transporter 6</fullName>
        <shortName>ZnT-6</shortName>
    </recommendedName>
    <alternativeName>
        <fullName>Solute carrier family 30 member 6</fullName>
    </alternativeName>
</protein>
<keyword id="KW-0333">Golgi apparatus</keyword>
<keyword id="KW-0406">Ion transport</keyword>
<keyword id="KW-0472">Membrane</keyword>
<keyword id="KW-1185">Reference proteome</keyword>
<keyword id="KW-0812">Transmembrane</keyword>
<keyword id="KW-1133">Transmembrane helix</keyword>
<keyword id="KW-0813">Transport</keyword>
<keyword id="KW-0862">Zinc</keyword>
<keyword id="KW-0864">Zinc transport</keyword>
<dbReference type="EMBL" id="BC058300">
    <property type="protein sequence ID" value="AAH58300.1"/>
    <property type="status" value="ALT_FRAME"/>
    <property type="molecule type" value="mRNA"/>
</dbReference>
<dbReference type="EMBL" id="BC065666">
    <property type="protein sequence ID" value="AAH65666.1"/>
    <property type="molecule type" value="mRNA"/>
</dbReference>
<dbReference type="RefSeq" id="NP_991214.1">
    <property type="nucleotide sequence ID" value="NM_205651.1"/>
</dbReference>
<dbReference type="SMR" id="Q6P0D1"/>
<dbReference type="FunCoup" id="Q6P0D1">
    <property type="interactions" value="814"/>
</dbReference>
<dbReference type="STRING" id="7955.ENSDARP00000150886"/>
<dbReference type="PaxDb" id="7955-ENSDARP00000060344"/>
<dbReference type="GeneID" id="402949"/>
<dbReference type="KEGG" id="dre:402949"/>
<dbReference type="AGR" id="ZFIN:ZDB-GENE-040426-1838"/>
<dbReference type="CTD" id="55676"/>
<dbReference type="ZFIN" id="ZDB-GENE-040426-1838">
    <property type="gene designation" value="slc30a6"/>
</dbReference>
<dbReference type="eggNOG" id="KOG1484">
    <property type="taxonomic scope" value="Eukaryota"/>
</dbReference>
<dbReference type="InParanoid" id="Q6P0D1"/>
<dbReference type="OrthoDB" id="5382797at2759"/>
<dbReference type="PhylomeDB" id="Q6P0D1"/>
<dbReference type="PRO" id="PR:Q6P0D1"/>
<dbReference type="Proteomes" id="UP000000437">
    <property type="component" value="Chromosome 13"/>
</dbReference>
<dbReference type="GO" id="GO:0005794">
    <property type="term" value="C:Golgi apparatus"/>
    <property type="evidence" value="ECO:0000318"/>
    <property type="project" value="GO_Central"/>
</dbReference>
<dbReference type="GO" id="GO:0032588">
    <property type="term" value="C:trans-Golgi network membrane"/>
    <property type="evidence" value="ECO:0000250"/>
    <property type="project" value="UniProtKB"/>
</dbReference>
<dbReference type="GO" id="GO:0005385">
    <property type="term" value="F:zinc ion transmembrane transporter activity"/>
    <property type="evidence" value="ECO:0000250"/>
    <property type="project" value="ZFIN"/>
</dbReference>
<dbReference type="GO" id="GO:1904257">
    <property type="term" value="P:zinc ion import into Golgi lumen"/>
    <property type="evidence" value="ECO:0000250"/>
    <property type="project" value="UniProtKB"/>
</dbReference>
<dbReference type="GO" id="GO:0006829">
    <property type="term" value="P:zinc ion transport"/>
    <property type="evidence" value="ECO:0000250"/>
    <property type="project" value="ZFIN"/>
</dbReference>
<dbReference type="FunFam" id="1.20.1510.10:FF:000009">
    <property type="entry name" value="zinc transporter 6 isoform X1"/>
    <property type="match status" value="1"/>
</dbReference>
<dbReference type="Gene3D" id="1.20.1510.10">
    <property type="entry name" value="Cation efflux protein transmembrane domain"/>
    <property type="match status" value="1"/>
</dbReference>
<dbReference type="InterPro" id="IPR002524">
    <property type="entry name" value="Cation_efflux"/>
</dbReference>
<dbReference type="InterPro" id="IPR027469">
    <property type="entry name" value="Cation_efflux_TMD_sf"/>
</dbReference>
<dbReference type="InterPro" id="IPR052005">
    <property type="entry name" value="CDF_SLC30A"/>
</dbReference>
<dbReference type="PANTHER" id="PTHR46531">
    <property type="entry name" value="ZINC TRANSPORTER 6"/>
    <property type="match status" value="1"/>
</dbReference>
<dbReference type="PANTHER" id="PTHR46531:SF1">
    <property type="entry name" value="ZINC TRANSPORTER 6"/>
    <property type="match status" value="1"/>
</dbReference>
<dbReference type="Pfam" id="PF01545">
    <property type="entry name" value="Cation_efflux"/>
    <property type="match status" value="1"/>
</dbReference>
<dbReference type="SUPFAM" id="SSF161111">
    <property type="entry name" value="Cation efflux protein transmembrane domain-like"/>
    <property type="match status" value="1"/>
</dbReference>
<accession>Q6P0D1</accession>
<accession>Q6PE38</accession>
<sequence length="486" mass="53172">MVALDVLGITDSDAPVYRQKQEADTLVLGTIHPFRKAHRSVLGKLAQEFRLVTSDRRSWKILLFGVLNVVCTGCLLMWCSSTNSMALTAYTYLTIFDLFSLITCLLSLWVTMKKPSQIYSFGFQRFEVLAVFSSTVLVQLGSLFILKESVERFVEQPEVHTGRLLVGTFVALFFNLLTLLSVKNKPFVFVSEAASTSWLQEHVADLSRSLCGLIPALSSFLLPRMNPFVLINLAGAFALGITYMLIEINNYNAMDTASAVAIALMTFGTMYPMSVYSGKVLLQTTPSHVIGQLDKLLREVSTLDGVLEVRNEHFWTIGFGSLAGSVHVRIRRDADEQMVLAHVWNRLSALVSALTVHVFKDEWSRASLSSGVLPSAPLSLSEYVTAAAVFPAAPSRAQGSEPTPATSTPAKPSSPPPEFSFHTPGRHVQPVVFQTAHPHRPLYGGLQGPGVRLGLGPRGPTLQAYRTLSAAPHTYTSGTYTGPPRP</sequence>
<gene>
    <name type="primary">slc30a6</name>
    <name type="synonym">znt6</name>
</gene>
<comment type="function">
    <text evidence="1">Has probably no intrinsic transporter activity but together with SLC30A5 forms a functional zinc ion:proton antiporter heterodimer, mediating zinc entry into the lumen of organelles along the secretory pathway. As part of that zinc ion:proton antiporter, contributes to zinc ion homeostasis within the early secretory pathway and regulates the activation and folding of enzymes like alkaline phosphatases and enzymes involved in phosphatidylinositol glycan anchor biosynthesis.</text>
</comment>
<comment type="subunit">
    <text evidence="1">Heterodimer with SLC30A5; form a functional zinc ion transmembrane transporter.</text>
</comment>
<comment type="subcellular location">
    <subcellularLocation>
        <location evidence="1">Golgi apparatus</location>
        <location evidence="1">trans-Golgi network membrane</location>
        <topology evidence="2">Multi-pass membrane protein</topology>
    </subcellularLocation>
</comment>
<comment type="similarity">
    <text evidence="4">Belongs to the cation diffusion facilitator (CDF) transporter (TC 2.A.4) family. SLC30A subfamily.</text>
</comment>
<comment type="caution">
    <text evidence="1">Hydrophilic histidine residues that participate to zinc binding in transporters of the family are not conserved in SLC30A6.</text>
</comment>
<comment type="sequence caution" evidence="4">
    <conflict type="frameshift">
        <sequence resource="EMBL-CDS" id="AAH58300"/>
    </conflict>
</comment>
<proteinExistence type="evidence at transcript level"/>
<organism>
    <name type="scientific">Danio rerio</name>
    <name type="common">Zebrafish</name>
    <name type="synonym">Brachydanio rerio</name>
    <dbReference type="NCBI Taxonomy" id="7955"/>
    <lineage>
        <taxon>Eukaryota</taxon>
        <taxon>Metazoa</taxon>
        <taxon>Chordata</taxon>
        <taxon>Craniata</taxon>
        <taxon>Vertebrata</taxon>
        <taxon>Euteleostomi</taxon>
        <taxon>Actinopterygii</taxon>
        <taxon>Neopterygii</taxon>
        <taxon>Teleostei</taxon>
        <taxon>Ostariophysi</taxon>
        <taxon>Cypriniformes</taxon>
        <taxon>Danionidae</taxon>
        <taxon>Danioninae</taxon>
        <taxon>Danio</taxon>
    </lineage>
</organism>